<proteinExistence type="inferred from homology"/>
<feature type="chain" id="PRO_0000371899" description="NADH-quinone oxidoreductase subunit D 1">
    <location>
        <begin position="1"/>
        <end position="426"/>
    </location>
</feature>
<feature type="region of interest" description="Disordered" evidence="2">
    <location>
        <begin position="1"/>
        <end position="51"/>
    </location>
</feature>
<evidence type="ECO:0000255" key="1">
    <source>
        <dbReference type="HAMAP-Rule" id="MF_01358"/>
    </source>
</evidence>
<evidence type="ECO:0000256" key="2">
    <source>
        <dbReference type="SAM" id="MobiDB-lite"/>
    </source>
</evidence>
<dbReference type="EC" id="7.1.1.-" evidence="1"/>
<dbReference type="EMBL" id="CP001032">
    <property type="protein sequence ID" value="ACB73773.1"/>
    <property type="molecule type" value="Genomic_DNA"/>
</dbReference>
<dbReference type="RefSeq" id="WP_012373311.1">
    <property type="nucleotide sequence ID" value="NC_010571.1"/>
</dbReference>
<dbReference type="SMR" id="B1ZRT0"/>
<dbReference type="STRING" id="452637.Oter_0483"/>
<dbReference type="KEGG" id="ote:Oter_0483"/>
<dbReference type="eggNOG" id="COG0649">
    <property type="taxonomic scope" value="Bacteria"/>
</dbReference>
<dbReference type="HOGENOM" id="CLU_015134_1_2_0"/>
<dbReference type="OrthoDB" id="9801496at2"/>
<dbReference type="Proteomes" id="UP000007013">
    <property type="component" value="Chromosome"/>
</dbReference>
<dbReference type="GO" id="GO:0005886">
    <property type="term" value="C:plasma membrane"/>
    <property type="evidence" value="ECO:0007669"/>
    <property type="project" value="UniProtKB-SubCell"/>
</dbReference>
<dbReference type="GO" id="GO:0051287">
    <property type="term" value="F:NAD binding"/>
    <property type="evidence" value="ECO:0007669"/>
    <property type="project" value="InterPro"/>
</dbReference>
<dbReference type="GO" id="GO:0050136">
    <property type="term" value="F:NADH:ubiquinone reductase (non-electrogenic) activity"/>
    <property type="evidence" value="ECO:0007669"/>
    <property type="project" value="UniProtKB-UniRule"/>
</dbReference>
<dbReference type="GO" id="GO:0048038">
    <property type="term" value="F:quinone binding"/>
    <property type="evidence" value="ECO:0007669"/>
    <property type="project" value="UniProtKB-KW"/>
</dbReference>
<dbReference type="Gene3D" id="1.10.645.10">
    <property type="entry name" value="Cytochrome-c3 Hydrogenase, chain B"/>
    <property type="match status" value="1"/>
</dbReference>
<dbReference type="HAMAP" id="MF_01358">
    <property type="entry name" value="NDH1_NuoD"/>
    <property type="match status" value="1"/>
</dbReference>
<dbReference type="InterPro" id="IPR001135">
    <property type="entry name" value="NADH_Q_OxRdtase_suD"/>
</dbReference>
<dbReference type="InterPro" id="IPR022885">
    <property type="entry name" value="NDH1_su_D/H"/>
</dbReference>
<dbReference type="InterPro" id="IPR029014">
    <property type="entry name" value="NiFe-Hase_large"/>
</dbReference>
<dbReference type="NCBIfam" id="TIGR01962">
    <property type="entry name" value="NuoD"/>
    <property type="match status" value="1"/>
</dbReference>
<dbReference type="NCBIfam" id="NF004739">
    <property type="entry name" value="PRK06075.1"/>
    <property type="match status" value="1"/>
</dbReference>
<dbReference type="PANTHER" id="PTHR11993:SF10">
    <property type="entry name" value="NADH DEHYDROGENASE [UBIQUINONE] IRON-SULFUR PROTEIN 2, MITOCHONDRIAL"/>
    <property type="match status" value="1"/>
</dbReference>
<dbReference type="PANTHER" id="PTHR11993">
    <property type="entry name" value="NADH-UBIQUINONE OXIDOREDUCTASE 49 KDA SUBUNIT"/>
    <property type="match status" value="1"/>
</dbReference>
<dbReference type="Pfam" id="PF00346">
    <property type="entry name" value="Complex1_49kDa"/>
    <property type="match status" value="1"/>
</dbReference>
<dbReference type="SUPFAM" id="SSF56762">
    <property type="entry name" value="HydB/Nqo4-like"/>
    <property type="match status" value="1"/>
</dbReference>
<name>NUOD1_OPITP</name>
<reference key="1">
    <citation type="journal article" date="2011" name="J. Bacteriol.">
        <title>Genome sequence of the verrucomicrobium Opitutus terrae PB90-1, an abundant inhabitant of rice paddy soil ecosystems.</title>
        <authorList>
            <person name="van Passel M.W."/>
            <person name="Kant R."/>
            <person name="Palva A."/>
            <person name="Copeland A."/>
            <person name="Lucas S."/>
            <person name="Lapidus A."/>
            <person name="Glavina del Rio T."/>
            <person name="Pitluck S."/>
            <person name="Goltsman E."/>
            <person name="Clum A."/>
            <person name="Sun H."/>
            <person name="Schmutz J."/>
            <person name="Larimer F.W."/>
            <person name="Land M.L."/>
            <person name="Hauser L."/>
            <person name="Kyrpides N."/>
            <person name="Mikhailova N."/>
            <person name="Richardson P.P."/>
            <person name="Janssen P.H."/>
            <person name="de Vos W.M."/>
            <person name="Smidt H."/>
        </authorList>
    </citation>
    <scope>NUCLEOTIDE SEQUENCE [LARGE SCALE GENOMIC DNA]</scope>
    <source>
        <strain>DSM 11246 / JCM 15787 / PB90-1</strain>
    </source>
</reference>
<accession>B1ZRT0</accession>
<gene>
    <name evidence="1" type="primary">nuoD1</name>
    <name type="ordered locus">Oter_0483</name>
</gene>
<organism>
    <name type="scientific">Opitutus terrae (strain DSM 11246 / JCM 15787 / PB90-1)</name>
    <dbReference type="NCBI Taxonomy" id="452637"/>
    <lineage>
        <taxon>Bacteria</taxon>
        <taxon>Pseudomonadati</taxon>
        <taxon>Verrucomicrobiota</taxon>
        <taxon>Opitutia</taxon>
        <taxon>Opitutales</taxon>
        <taxon>Opitutaceae</taxon>
        <taxon>Opitutus</taxon>
    </lineage>
</organism>
<comment type="function">
    <text evidence="1">NDH-1 shuttles electrons from NADH, via FMN and iron-sulfur (Fe-S) centers, to quinones in the respiratory chain. The immediate electron acceptor for the enzyme in this species is believed to be ubiquinone. Couples the redox reaction to proton translocation (for every two electrons transferred, four hydrogen ions are translocated across the cytoplasmic membrane), and thus conserves the redox energy in a proton gradient.</text>
</comment>
<comment type="catalytic activity">
    <reaction evidence="1">
        <text>a quinone + NADH + 5 H(+)(in) = a quinol + NAD(+) + 4 H(+)(out)</text>
        <dbReference type="Rhea" id="RHEA:57888"/>
        <dbReference type="ChEBI" id="CHEBI:15378"/>
        <dbReference type="ChEBI" id="CHEBI:24646"/>
        <dbReference type="ChEBI" id="CHEBI:57540"/>
        <dbReference type="ChEBI" id="CHEBI:57945"/>
        <dbReference type="ChEBI" id="CHEBI:132124"/>
    </reaction>
</comment>
<comment type="subunit">
    <text evidence="1">NDH-1 is composed of 14 different subunits. Subunits NuoB, C, D, E, F, and G constitute the peripheral sector of the complex.</text>
</comment>
<comment type="subcellular location">
    <subcellularLocation>
        <location evidence="1">Cell inner membrane</location>
        <topology evidence="1">Peripheral membrane protein</topology>
        <orientation evidence="1">Cytoplasmic side</orientation>
    </subcellularLocation>
</comment>
<comment type="similarity">
    <text evidence="1">Belongs to the complex I 49 kDa subunit family.</text>
</comment>
<keyword id="KW-0997">Cell inner membrane</keyword>
<keyword id="KW-1003">Cell membrane</keyword>
<keyword id="KW-0472">Membrane</keyword>
<keyword id="KW-0520">NAD</keyword>
<keyword id="KW-0874">Quinone</keyword>
<keyword id="KW-1185">Reference proteome</keyword>
<keyword id="KW-1278">Translocase</keyword>
<keyword id="KW-0813">Transport</keyword>
<keyword id="KW-0830">Ubiquinone</keyword>
<sequence>MATEFTVPDSAARIATAQQAGGGTPVRSGPPDEGGEFSGDRMSLSMGPSHPSTHGVLRIQMELEGEILTKADPIIGYLHRGDEKIAENMTYNQFVPYTDRLDYLAPLANNMAYVIAVEKLAGLTVPPRCQAIRVITAELARISSHLMGLGAFGLDVGAWTVLVLSLNQREFLYNLFEDLTGARFTTSYTRIGGVTRDVPPGWLENVGTFCDKFLPALEEILSLLTRNKIFLDRTVGVGVISKEDAIAYGITGPNARGSGIATDLRKDRPYSGYEQYEFDVPVGTKGDCYDRYLVRGEEMRQSVRIIRQVIKNFPGGDWYATEAKKVFLPPKGKVLSSMEELIQQFMLVTEGPQMPAGEVYFEAENPKGILGFYIVSKGGGVPYRLKIRSPSFCNLSLVPKLCQGVLISDVVAILGSLDFVMGECDR</sequence>
<protein>
    <recommendedName>
        <fullName evidence="1">NADH-quinone oxidoreductase subunit D 1</fullName>
        <ecNumber evidence="1">7.1.1.-</ecNumber>
    </recommendedName>
    <alternativeName>
        <fullName evidence="1">NADH dehydrogenase I subunit D 1</fullName>
    </alternativeName>
    <alternativeName>
        <fullName evidence="1">NDH-1 subunit D 1</fullName>
    </alternativeName>
</protein>